<dbReference type="EC" id="2.4.99.17" evidence="1"/>
<dbReference type="EMBL" id="CP000826">
    <property type="protein sequence ID" value="ABV40164.1"/>
    <property type="molecule type" value="Genomic_DNA"/>
</dbReference>
<dbReference type="SMR" id="A8GAM4"/>
<dbReference type="STRING" id="399741.Spro_1060"/>
<dbReference type="KEGG" id="spe:Spro_1060"/>
<dbReference type="eggNOG" id="COG0809">
    <property type="taxonomic scope" value="Bacteria"/>
</dbReference>
<dbReference type="HOGENOM" id="CLU_039110_1_0_6"/>
<dbReference type="OrthoDB" id="9805933at2"/>
<dbReference type="UniPathway" id="UPA00392"/>
<dbReference type="GO" id="GO:0005737">
    <property type="term" value="C:cytoplasm"/>
    <property type="evidence" value="ECO:0007669"/>
    <property type="project" value="UniProtKB-SubCell"/>
</dbReference>
<dbReference type="GO" id="GO:0051075">
    <property type="term" value="F:S-adenosylmethionine:tRNA ribosyltransferase-isomerase activity"/>
    <property type="evidence" value="ECO:0007669"/>
    <property type="project" value="UniProtKB-EC"/>
</dbReference>
<dbReference type="GO" id="GO:0008616">
    <property type="term" value="P:queuosine biosynthetic process"/>
    <property type="evidence" value="ECO:0007669"/>
    <property type="project" value="UniProtKB-UniRule"/>
</dbReference>
<dbReference type="GO" id="GO:0002099">
    <property type="term" value="P:tRNA wobble guanine modification"/>
    <property type="evidence" value="ECO:0007669"/>
    <property type="project" value="TreeGrafter"/>
</dbReference>
<dbReference type="FunFam" id="2.40.10.240:FF:000001">
    <property type="entry name" value="S-adenosylmethionine:tRNA ribosyltransferase-isomerase"/>
    <property type="match status" value="1"/>
</dbReference>
<dbReference type="FunFam" id="3.40.1780.10:FF:000001">
    <property type="entry name" value="S-adenosylmethionine:tRNA ribosyltransferase-isomerase"/>
    <property type="match status" value="1"/>
</dbReference>
<dbReference type="Gene3D" id="2.40.10.240">
    <property type="entry name" value="QueA-like"/>
    <property type="match status" value="1"/>
</dbReference>
<dbReference type="Gene3D" id="3.40.1780.10">
    <property type="entry name" value="QueA-like"/>
    <property type="match status" value="1"/>
</dbReference>
<dbReference type="HAMAP" id="MF_00113">
    <property type="entry name" value="QueA"/>
    <property type="match status" value="1"/>
</dbReference>
<dbReference type="InterPro" id="IPR003699">
    <property type="entry name" value="QueA"/>
</dbReference>
<dbReference type="InterPro" id="IPR042118">
    <property type="entry name" value="QueA_dom1"/>
</dbReference>
<dbReference type="InterPro" id="IPR042119">
    <property type="entry name" value="QueA_dom2"/>
</dbReference>
<dbReference type="InterPro" id="IPR036100">
    <property type="entry name" value="QueA_sf"/>
</dbReference>
<dbReference type="NCBIfam" id="NF001140">
    <property type="entry name" value="PRK00147.1"/>
    <property type="match status" value="1"/>
</dbReference>
<dbReference type="NCBIfam" id="TIGR00113">
    <property type="entry name" value="queA"/>
    <property type="match status" value="1"/>
</dbReference>
<dbReference type="PANTHER" id="PTHR30307">
    <property type="entry name" value="S-ADENOSYLMETHIONINE:TRNA RIBOSYLTRANSFERASE-ISOMERASE"/>
    <property type="match status" value="1"/>
</dbReference>
<dbReference type="PANTHER" id="PTHR30307:SF0">
    <property type="entry name" value="S-ADENOSYLMETHIONINE:TRNA RIBOSYLTRANSFERASE-ISOMERASE"/>
    <property type="match status" value="1"/>
</dbReference>
<dbReference type="Pfam" id="PF02547">
    <property type="entry name" value="Queuosine_synth"/>
    <property type="match status" value="1"/>
</dbReference>
<dbReference type="SUPFAM" id="SSF111337">
    <property type="entry name" value="QueA-like"/>
    <property type="match status" value="1"/>
</dbReference>
<keyword id="KW-0963">Cytoplasm</keyword>
<keyword id="KW-0671">Queuosine biosynthesis</keyword>
<keyword id="KW-0949">S-adenosyl-L-methionine</keyword>
<keyword id="KW-0808">Transferase</keyword>
<feature type="chain" id="PRO_1000057743" description="S-adenosylmethionine:tRNA ribosyltransferase-isomerase">
    <location>
        <begin position="1"/>
        <end position="356"/>
    </location>
</feature>
<proteinExistence type="inferred from homology"/>
<reference key="1">
    <citation type="submission" date="2007-09" db="EMBL/GenBank/DDBJ databases">
        <title>Complete sequence of chromosome of Serratia proteamaculans 568.</title>
        <authorList>
            <consortium name="US DOE Joint Genome Institute"/>
            <person name="Copeland A."/>
            <person name="Lucas S."/>
            <person name="Lapidus A."/>
            <person name="Barry K."/>
            <person name="Glavina del Rio T."/>
            <person name="Dalin E."/>
            <person name="Tice H."/>
            <person name="Pitluck S."/>
            <person name="Chain P."/>
            <person name="Malfatti S."/>
            <person name="Shin M."/>
            <person name="Vergez L."/>
            <person name="Schmutz J."/>
            <person name="Larimer F."/>
            <person name="Land M."/>
            <person name="Hauser L."/>
            <person name="Kyrpides N."/>
            <person name="Kim E."/>
            <person name="Taghavi S."/>
            <person name="Newman L."/>
            <person name="Vangronsveld J."/>
            <person name="van der Lelie D."/>
            <person name="Richardson P."/>
        </authorList>
    </citation>
    <scope>NUCLEOTIDE SEQUENCE [LARGE SCALE GENOMIC DNA]</scope>
    <source>
        <strain>568</strain>
    </source>
</reference>
<name>QUEA_SERP5</name>
<organism>
    <name type="scientific">Serratia proteamaculans (strain 568)</name>
    <dbReference type="NCBI Taxonomy" id="399741"/>
    <lineage>
        <taxon>Bacteria</taxon>
        <taxon>Pseudomonadati</taxon>
        <taxon>Pseudomonadota</taxon>
        <taxon>Gammaproteobacteria</taxon>
        <taxon>Enterobacterales</taxon>
        <taxon>Yersiniaceae</taxon>
        <taxon>Serratia</taxon>
    </lineage>
</organism>
<accession>A8GAM4</accession>
<sequence length="356" mass="39331">MRVADFSFELPESLIAHYPQPERSGCRLLQLDGPSGELKHGVFTDLLDNLEAGDLLVFNNTRVIPARMFGRKVSGGKIEVLVERVLDDHRVLAHVRASKAPKPGTDLLLGDDESIAATMVARHDTLFELRFNDERDVFTILNAVGHMPLPPYIDRPDEDADRELYQTVYSEKPGAVAAPTAGLHFDEPLLAALREKGIEMAFVTLHVGAGTFQPVRVETIEEHVMHAEYAEVPQEVVDAVLACKARGKRVVAVGTTSVRSLESAANASKEALIAPFFDDTSIFIFPGYHYQVVDALVTNFHLPESTLIMLVSAFAGYKNTMHAYQQAVAEQYRFFSYGDAMFISRNPQAEQESVGA</sequence>
<comment type="function">
    <text evidence="1">Transfers and isomerizes the ribose moiety from AdoMet to the 7-aminomethyl group of 7-deazaguanine (preQ1-tRNA) to give epoxyqueuosine (oQ-tRNA).</text>
</comment>
<comment type="catalytic activity">
    <reaction evidence="1">
        <text>7-aminomethyl-7-carbaguanosine(34) in tRNA + S-adenosyl-L-methionine = epoxyqueuosine(34) in tRNA + adenine + L-methionine + 2 H(+)</text>
        <dbReference type="Rhea" id="RHEA:32155"/>
        <dbReference type="Rhea" id="RHEA-COMP:10342"/>
        <dbReference type="Rhea" id="RHEA-COMP:18582"/>
        <dbReference type="ChEBI" id="CHEBI:15378"/>
        <dbReference type="ChEBI" id="CHEBI:16708"/>
        <dbReference type="ChEBI" id="CHEBI:57844"/>
        <dbReference type="ChEBI" id="CHEBI:59789"/>
        <dbReference type="ChEBI" id="CHEBI:82833"/>
        <dbReference type="ChEBI" id="CHEBI:194443"/>
        <dbReference type="EC" id="2.4.99.17"/>
    </reaction>
</comment>
<comment type="pathway">
    <text evidence="1">tRNA modification; tRNA-queuosine biosynthesis.</text>
</comment>
<comment type="subunit">
    <text evidence="1">Monomer.</text>
</comment>
<comment type="subcellular location">
    <subcellularLocation>
        <location evidence="1">Cytoplasm</location>
    </subcellularLocation>
</comment>
<comment type="similarity">
    <text evidence="1">Belongs to the QueA family.</text>
</comment>
<protein>
    <recommendedName>
        <fullName evidence="1">S-adenosylmethionine:tRNA ribosyltransferase-isomerase</fullName>
        <ecNumber evidence="1">2.4.99.17</ecNumber>
    </recommendedName>
    <alternativeName>
        <fullName evidence="1">Queuosine biosynthesis protein QueA</fullName>
    </alternativeName>
</protein>
<gene>
    <name evidence="1" type="primary">queA</name>
    <name type="ordered locus">Spro_1060</name>
</gene>
<evidence type="ECO:0000255" key="1">
    <source>
        <dbReference type="HAMAP-Rule" id="MF_00113"/>
    </source>
</evidence>